<evidence type="ECO:0000256" key="1">
    <source>
        <dbReference type="SAM" id="MobiDB-lite"/>
    </source>
</evidence>
<evidence type="ECO:0000303" key="2">
    <source>
    </source>
</evidence>
<evidence type="ECO:0000305" key="3"/>
<evidence type="ECO:0007744" key="4">
    <source>
    </source>
</evidence>
<evidence type="ECO:0007744" key="5">
    <source>
    </source>
</evidence>
<reference key="1">
    <citation type="journal article" date="2005" name="Science">
        <title>The transcriptional landscape of the mammalian genome.</title>
        <authorList>
            <person name="Carninci P."/>
            <person name="Kasukawa T."/>
            <person name="Katayama S."/>
            <person name="Gough J."/>
            <person name="Frith M.C."/>
            <person name="Maeda N."/>
            <person name="Oyama R."/>
            <person name="Ravasi T."/>
            <person name="Lenhard B."/>
            <person name="Wells C."/>
            <person name="Kodzius R."/>
            <person name="Shimokawa K."/>
            <person name="Bajic V.B."/>
            <person name="Brenner S.E."/>
            <person name="Batalov S."/>
            <person name="Forrest A.R."/>
            <person name="Zavolan M."/>
            <person name="Davis M.J."/>
            <person name="Wilming L.G."/>
            <person name="Aidinis V."/>
            <person name="Allen J.E."/>
            <person name="Ambesi-Impiombato A."/>
            <person name="Apweiler R."/>
            <person name="Aturaliya R.N."/>
            <person name="Bailey T.L."/>
            <person name="Bansal M."/>
            <person name="Baxter L."/>
            <person name="Beisel K.W."/>
            <person name="Bersano T."/>
            <person name="Bono H."/>
            <person name="Chalk A.M."/>
            <person name="Chiu K.P."/>
            <person name="Choudhary V."/>
            <person name="Christoffels A."/>
            <person name="Clutterbuck D.R."/>
            <person name="Crowe M.L."/>
            <person name="Dalla E."/>
            <person name="Dalrymple B.P."/>
            <person name="de Bono B."/>
            <person name="Della Gatta G."/>
            <person name="di Bernardo D."/>
            <person name="Down T."/>
            <person name="Engstrom P."/>
            <person name="Fagiolini M."/>
            <person name="Faulkner G."/>
            <person name="Fletcher C.F."/>
            <person name="Fukushima T."/>
            <person name="Furuno M."/>
            <person name="Futaki S."/>
            <person name="Gariboldi M."/>
            <person name="Georgii-Hemming P."/>
            <person name="Gingeras T.R."/>
            <person name="Gojobori T."/>
            <person name="Green R.E."/>
            <person name="Gustincich S."/>
            <person name="Harbers M."/>
            <person name="Hayashi Y."/>
            <person name="Hensch T.K."/>
            <person name="Hirokawa N."/>
            <person name="Hill D."/>
            <person name="Huminiecki L."/>
            <person name="Iacono M."/>
            <person name="Ikeo K."/>
            <person name="Iwama A."/>
            <person name="Ishikawa T."/>
            <person name="Jakt M."/>
            <person name="Kanapin A."/>
            <person name="Katoh M."/>
            <person name="Kawasawa Y."/>
            <person name="Kelso J."/>
            <person name="Kitamura H."/>
            <person name="Kitano H."/>
            <person name="Kollias G."/>
            <person name="Krishnan S.P."/>
            <person name="Kruger A."/>
            <person name="Kummerfeld S.K."/>
            <person name="Kurochkin I.V."/>
            <person name="Lareau L.F."/>
            <person name="Lazarevic D."/>
            <person name="Lipovich L."/>
            <person name="Liu J."/>
            <person name="Liuni S."/>
            <person name="McWilliam S."/>
            <person name="Madan Babu M."/>
            <person name="Madera M."/>
            <person name="Marchionni L."/>
            <person name="Matsuda H."/>
            <person name="Matsuzawa S."/>
            <person name="Miki H."/>
            <person name="Mignone F."/>
            <person name="Miyake S."/>
            <person name="Morris K."/>
            <person name="Mottagui-Tabar S."/>
            <person name="Mulder N."/>
            <person name="Nakano N."/>
            <person name="Nakauchi H."/>
            <person name="Ng P."/>
            <person name="Nilsson R."/>
            <person name="Nishiguchi S."/>
            <person name="Nishikawa S."/>
            <person name="Nori F."/>
            <person name="Ohara O."/>
            <person name="Okazaki Y."/>
            <person name="Orlando V."/>
            <person name="Pang K.C."/>
            <person name="Pavan W.J."/>
            <person name="Pavesi G."/>
            <person name="Pesole G."/>
            <person name="Petrovsky N."/>
            <person name="Piazza S."/>
            <person name="Reed J."/>
            <person name="Reid J.F."/>
            <person name="Ring B.Z."/>
            <person name="Ringwald M."/>
            <person name="Rost B."/>
            <person name="Ruan Y."/>
            <person name="Salzberg S.L."/>
            <person name="Sandelin A."/>
            <person name="Schneider C."/>
            <person name="Schoenbach C."/>
            <person name="Sekiguchi K."/>
            <person name="Semple C.A."/>
            <person name="Seno S."/>
            <person name="Sessa L."/>
            <person name="Sheng Y."/>
            <person name="Shibata Y."/>
            <person name="Shimada H."/>
            <person name="Shimada K."/>
            <person name="Silva D."/>
            <person name="Sinclair B."/>
            <person name="Sperling S."/>
            <person name="Stupka E."/>
            <person name="Sugiura K."/>
            <person name="Sultana R."/>
            <person name="Takenaka Y."/>
            <person name="Taki K."/>
            <person name="Tammoja K."/>
            <person name="Tan S.L."/>
            <person name="Tang S."/>
            <person name="Taylor M.S."/>
            <person name="Tegner J."/>
            <person name="Teichmann S.A."/>
            <person name="Ueda H.R."/>
            <person name="van Nimwegen E."/>
            <person name="Verardo R."/>
            <person name="Wei C.L."/>
            <person name="Yagi K."/>
            <person name="Yamanishi H."/>
            <person name="Zabarovsky E."/>
            <person name="Zhu S."/>
            <person name="Zimmer A."/>
            <person name="Hide W."/>
            <person name="Bult C."/>
            <person name="Grimmond S.M."/>
            <person name="Teasdale R.D."/>
            <person name="Liu E.T."/>
            <person name="Brusic V."/>
            <person name="Quackenbush J."/>
            <person name="Wahlestedt C."/>
            <person name="Mattick J.S."/>
            <person name="Hume D.A."/>
            <person name="Kai C."/>
            <person name="Sasaki D."/>
            <person name="Tomaru Y."/>
            <person name="Fukuda S."/>
            <person name="Kanamori-Katayama M."/>
            <person name="Suzuki M."/>
            <person name="Aoki J."/>
            <person name="Arakawa T."/>
            <person name="Iida J."/>
            <person name="Imamura K."/>
            <person name="Itoh M."/>
            <person name="Kato T."/>
            <person name="Kawaji H."/>
            <person name="Kawagashira N."/>
            <person name="Kawashima T."/>
            <person name="Kojima M."/>
            <person name="Kondo S."/>
            <person name="Konno H."/>
            <person name="Nakano K."/>
            <person name="Ninomiya N."/>
            <person name="Nishio T."/>
            <person name="Okada M."/>
            <person name="Plessy C."/>
            <person name="Shibata K."/>
            <person name="Shiraki T."/>
            <person name="Suzuki S."/>
            <person name="Tagami M."/>
            <person name="Waki K."/>
            <person name="Watahiki A."/>
            <person name="Okamura-Oho Y."/>
            <person name="Suzuki H."/>
            <person name="Kawai J."/>
            <person name="Hayashizaki Y."/>
        </authorList>
    </citation>
    <scope>NUCLEOTIDE SEQUENCE [LARGE SCALE MRNA] (ISOFORM 2)</scope>
    <source>
        <strain>C57BL/6J</strain>
        <tissue>Amnion</tissue>
    </source>
</reference>
<reference key="2">
    <citation type="journal article" date="2009" name="PLoS Biol.">
        <title>Lineage-specific biology revealed by a finished genome assembly of the mouse.</title>
        <authorList>
            <person name="Church D.M."/>
            <person name="Goodstadt L."/>
            <person name="Hillier L.W."/>
            <person name="Zody M.C."/>
            <person name="Goldstein S."/>
            <person name="She X."/>
            <person name="Bult C.J."/>
            <person name="Agarwala R."/>
            <person name="Cherry J.L."/>
            <person name="DiCuccio M."/>
            <person name="Hlavina W."/>
            <person name="Kapustin Y."/>
            <person name="Meric P."/>
            <person name="Maglott D."/>
            <person name="Birtle Z."/>
            <person name="Marques A.C."/>
            <person name="Graves T."/>
            <person name="Zhou S."/>
            <person name="Teague B."/>
            <person name="Potamousis K."/>
            <person name="Churas C."/>
            <person name="Place M."/>
            <person name="Herschleb J."/>
            <person name="Runnheim R."/>
            <person name="Forrest D."/>
            <person name="Amos-Landgraf J."/>
            <person name="Schwartz D.C."/>
            <person name="Cheng Z."/>
            <person name="Lindblad-Toh K."/>
            <person name="Eichler E.E."/>
            <person name="Ponting C.P."/>
        </authorList>
    </citation>
    <scope>NUCLEOTIDE SEQUENCE [LARGE SCALE GENOMIC DNA]</scope>
    <source>
        <strain>C57BL/6J</strain>
    </source>
</reference>
<reference key="3">
    <citation type="journal article" date="2004" name="Genome Res.">
        <title>The status, quality, and expansion of the NIH full-length cDNA project: the Mammalian Gene Collection (MGC).</title>
        <authorList>
            <consortium name="The MGC Project Team"/>
        </authorList>
    </citation>
    <scope>NUCLEOTIDE SEQUENCE [LARGE SCALE MRNA] (ISOFORM 1)</scope>
    <source>
        <strain>Czech II</strain>
        <tissue>Limb</tissue>
        <tissue>Mammary tumor</tissue>
    </source>
</reference>
<reference key="4">
    <citation type="journal article" date="2009" name="Immunity">
        <title>The phagosomal proteome in interferon-gamma-activated macrophages.</title>
        <authorList>
            <person name="Trost M."/>
            <person name="English L."/>
            <person name="Lemieux S."/>
            <person name="Courcelles M."/>
            <person name="Desjardins M."/>
            <person name="Thibault P."/>
        </authorList>
    </citation>
    <scope>PHOSPHORYLATION [LARGE SCALE ANALYSIS] AT SER-322</scope>
    <scope>IDENTIFICATION BY MASS SPECTROMETRY [LARGE SCALE ANALYSIS]</scope>
</reference>
<reference key="5">
    <citation type="journal article" date="2010" name="Cell">
        <title>A tissue-specific atlas of mouse protein phosphorylation and expression.</title>
        <authorList>
            <person name="Huttlin E.L."/>
            <person name="Jedrychowski M.P."/>
            <person name="Elias J.E."/>
            <person name="Goswami T."/>
            <person name="Rad R."/>
            <person name="Beausoleil S.A."/>
            <person name="Villen J."/>
            <person name="Haas W."/>
            <person name="Sowa M.E."/>
            <person name="Gygi S.P."/>
        </authorList>
    </citation>
    <scope>PHOSPHORYLATION [LARGE SCALE ANALYSIS] AT SER-322 AND THR-325</scope>
    <scope>IDENTIFICATION BY MASS SPECTROMETRY [LARGE SCALE ANALYSIS]</scope>
    <source>
        <tissue>Brain</tissue>
    </source>
</reference>
<dbReference type="EMBL" id="AK146714">
    <property type="protein sequence ID" value="BAE27379.1"/>
    <property type="molecule type" value="mRNA"/>
</dbReference>
<dbReference type="EMBL" id="AL596181">
    <property type="status" value="NOT_ANNOTATED_CDS"/>
    <property type="molecule type" value="Genomic_DNA"/>
</dbReference>
<dbReference type="EMBL" id="BC046404">
    <property type="protein sequence ID" value="AAH46404.1"/>
    <property type="molecule type" value="mRNA"/>
</dbReference>
<dbReference type="EMBL" id="BC053455">
    <property type="protein sequence ID" value="AAH53455.1"/>
    <property type="molecule type" value="mRNA"/>
</dbReference>
<dbReference type="CCDS" id="CCDS24828.1">
    <molecule id="Q7TSF4-1"/>
</dbReference>
<dbReference type="RefSeq" id="NP_001344884.1">
    <molecule id="Q7TSF4-2"/>
    <property type="nucleotide sequence ID" value="NM_001357955.1"/>
</dbReference>
<dbReference type="RefSeq" id="NP_942561.1">
    <molecule id="Q7TSF4-1"/>
    <property type="nucleotide sequence ID" value="NM_198861.1"/>
</dbReference>
<dbReference type="RefSeq" id="XP_006532640.1">
    <property type="nucleotide sequence ID" value="XM_006532577.3"/>
</dbReference>
<dbReference type="FunCoup" id="Q7TSF4">
    <property type="interactions" value="419"/>
</dbReference>
<dbReference type="STRING" id="10090.ENSMUSP00000062489"/>
<dbReference type="GlyGen" id="Q7TSF4">
    <property type="glycosylation" value="1 site"/>
</dbReference>
<dbReference type="iPTMnet" id="Q7TSF4"/>
<dbReference type="PhosphoSitePlus" id="Q7TSF4"/>
<dbReference type="PaxDb" id="10090-ENSMUSP00000062489"/>
<dbReference type="PeptideAtlas" id="Q7TSF4"/>
<dbReference type="ProteomicsDB" id="252663">
    <molecule id="Q7TSF4-1"/>
</dbReference>
<dbReference type="ProteomicsDB" id="252664">
    <molecule id="Q7TSF4-2"/>
</dbReference>
<dbReference type="Pumba" id="Q7TSF4"/>
<dbReference type="Antibodypedia" id="25337">
    <property type="antibodies" value="21 antibodies from 10 providers"/>
</dbReference>
<dbReference type="DNASU" id="192976"/>
<dbReference type="Ensembl" id="ENSMUST00000057194.9">
    <molecule id="Q7TSF4-1"/>
    <property type="protein sequence ID" value="ENSMUSP00000062489.9"/>
    <property type="gene ID" value="ENSMUSG00000046417.15"/>
</dbReference>
<dbReference type="GeneID" id="192976"/>
<dbReference type="KEGG" id="mmu:192976"/>
<dbReference type="UCSC" id="uc007jjm.1">
    <molecule id="Q7TSF4-1"/>
    <property type="organism name" value="mouse"/>
</dbReference>
<dbReference type="AGR" id="MGI:2682293"/>
<dbReference type="CTD" id="388341"/>
<dbReference type="MGI" id="MGI:2682293">
    <property type="gene designation" value="Lrrc75a"/>
</dbReference>
<dbReference type="VEuPathDB" id="HostDB:ENSMUSG00000046417"/>
<dbReference type="eggNOG" id="ENOG502QVX0">
    <property type="taxonomic scope" value="Eukaryota"/>
</dbReference>
<dbReference type="GeneTree" id="ENSGT00940000161370"/>
<dbReference type="HOGENOM" id="CLU_050536_0_0_1"/>
<dbReference type="InParanoid" id="Q7TSF4"/>
<dbReference type="OMA" id="NPPDNTV"/>
<dbReference type="OrthoDB" id="9979103at2759"/>
<dbReference type="PhylomeDB" id="Q7TSF4"/>
<dbReference type="TreeFam" id="TF332831"/>
<dbReference type="BioGRID-ORCS" id="192976">
    <property type="hits" value="2 hits in 75 CRISPR screens"/>
</dbReference>
<dbReference type="ChiTaRS" id="Lrrc75a">
    <property type="organism name" value="mouse"/>
</dbReference>
<dbReference type="PRO" id="PR:Q7TSF4"/>
<dbReference type="Proteomes" id="UP000000589">
    <property type="component" value="Chromosome 11"/>
</dbReference>
<dbReference type="RNAct" id="Q7TSF4">
    <property type="molecule type" value="protein"/>
</dbReference>
<dbReference type="Bgee" id="ENSMUSG00000046417">
    <property type="expression patterns" value="Expressed in ear vesicle and 186 other cell types or tissues"/>
</dbReference>
<dbReference type="FunFam" id="3.80.10.10:FF:000158">
    <property type="entry name" value="Leucine rich repeat containing 75A"/>
    <property type="match status" value="1"/>
</dbReference>
<dbReference type="Gene3D" id="3.80.10.10">
    <property type="entry name" value="Ribonuclease Inhibitor"/>
    <property type="match status" value="1"/>
</dbReference>
<dbReference type="InterPro" id="IPR032675">
    <property type="entry name" value="LRR_dom_sf"/>
</dbReference>
<dbReference type="PANTHER" id="PTHR39654:SF3">
    <property type="entry name" value="LEUCINE RICH REPEAT CONTAINING 75A"/>
    <property type="match status" value="1"/>
</dbReference>
<dbReference type="PANTHER" id="PTHR39654">
    <property type="entry name" value="LEUCINE-RICH REPEAT-CONTAINING PROTEIN 75A-LIKE ISOFORM X1"/>
    <property type="match status" value="1"/>
</dbReference>
<dbReference type="SUPFAM" id="SSF52047">
    <property type="entry name" value="RNI-like"/>
    <property type="match status" value="1"/>
</dbReference>
<sequence>MGTRQTKGSLAERASPGAAPGPRRERPDFWASLLLRAGDKAGRAGSGLPPYHRRVGMVQELLRMVRQGRREEAGTLLQHLRQDLGMESTSLDDVLYRYASFRNLVDPITHDLIISLARYIHCPKPEGDAMGAMEKLCRQLTYHLSPHSQWRRHRGLKRKPQACLKALLSGNPPDNMVDLSGIPLTSRDLERVTSYLQRCGEQVDSVELGFTGLTDDMVLQLLPALSTLPRLTTLALNGNRLTRALLRDLTDTLKDPSKFPNVTWIDLGNNVDIFSLPQPFLLSLRKRSPKQGHLPTILELGEGPGTGEEAREGTDQQDPIGSPVTPARGQESTECVIQT</sequence>
<name>LR75A_MOUSE</name>
<accession>Q7TSF4</accession>
<accession>Q3UIX7</accession>
<accession>Q811G5</accession>
<protein>
    <recommendedName>
        <fullName>Leucine-rich repeat-containing protein 75A</fullName>
    </recommendedName>
    <alternativeName>
        <fullName>Leucine-rich repeat-containing protein FAM211A</fullName>
    </alternativeName>
</protein>
<organism>
    <name type="scientific">Mus musculus</name>
    <name type="common">Mouse</name>
    <dbReference type="NCBI Taxonomy" id="10090"/>
    <lineage>
        <taxon>Eukaryota</taxon>
        <taxon>Metazoa</taxon>
        <taxon>Chordata</taxon>
        <taxon>Craniata</taxon>
        <taxon>Vertebrata</taxon>
        <taxon>Euteleostomi</taxon>
        <taxon>Mammalia</taxon>
        <taxon>Eutheria</taxon>
        <taxon>Euarchontoglires</taxon>
        <taxon>Glires</taxon>
        <taxon>Rodentia</taxon>
        <taxon>Myomorpha</taxon>
        <taxon>Muroidea</taxon>
        <taxon>Muridae</taxon>
        <taxon>Murinae</taxon>
        <taxon>Mus</taxon>
        <taxon>Mus</taxon>
    </lineage>
</organism>
<comment type="alternative products">
    <event type="alternative splicing"/>
    <isoform>
        <id>Q7TSF4-1</id>
        <name>1</name>
        <sequence type="displayed"/>
    </isoform>
    <isoform>
        <id>Q7TSF4-2</id>
        <name>2</name>
        <sequence type="described" ref="VSP_025136"/>
    </isoform>
</comment>
<comment type="similarity">
    <text evidence="3">Belongs to the LRRC75 family.</text>
</comment>
<feature type="chain" id="PRO_0000286625" description="Leucine-rich repeat-containing protein 75A">
    <location>
        <begin position="1"/>
        <end position="339"/>
    </location>
</feature>
<feature type="repeat" description="LRR 1">
    <location>
        <begin position="203"/>
        <end position="216"/>
    </location>
</feature>
<feature type="repeat" description="LRR 2">
    <location>
        <begin position="228"/>
        <end position="241"/>
    </location>
</feature>
<feature type="region of interest" description="Disordered" evidence="1">
    <location>
        <begin position="1"/>
        <end position="25"/>
    </location>
</feature>
<feature type="region of interest" description="Disordered" evidence="1">
    <location>
        <begin position="294"/>
        <end position="339"/>
    </location>
</feature>
<feature type="compositionally biased region" description="Low complexity" evidence="1">
    <location>
        <begin position="11"/>
        <end position="21"/>
    </location>
</feature>
<feature type="compositionally biased region" description="Polar residues" evidence="1">
    <location>
        <begin position="330"/>
        <end position="339"/>
    </location>
</feature>
<feature type="modified residue" description="Phosphoserine" evidence="4 5">
    <location>
        <position position="322"/>
    </location>
</feature>
<feature type="modified residue" description="Phosphothreonine" evidence="5">
    <location>
        <position position="325"/>
    </location>
</feature>
<feature type="splice variant" id="VSP_025136" description="In isoform 2." evidence="2">
    <location>
        <begin position="1"/>
        <end position="85"/>
    </location>
</feature>
<keyword id="KW-0025">Alternative splicing</keyword>
<keyword id="KW-0433">Leucine-rich repeat</keyword>
<keyword id="KW-0597">Phosphoprotein</keyword>
<keyword id="KW-1185">Reference proteome</keyword>
<keyword id="KW-0677">Repeat</keyword>
<gene>
    <name type="primary">Lrrc75a</name>
    <name type="synonym">Fam211a</name>
</gene>
<proteinExistence type="evidence at protein level"/>